<comment type="function">
    <text evidence="1">Catalyzes the conversion of dethiobiotin (DTB) to biotin by the insertion of a sulfur atom into dethiobiotin via a radical-based mechanism.</text>
</comment>
<comment type="catalytic activity">
    <reaction evidence="1">
        <text>(4R,5S)-dethiobiotin + (sulfur carrier)-SH + 2 reduced [2Fe-2S]-[ferredoxin] + 2 S-adenosyl-L-methionine = (sulfur carrier)-H + biotin + 2 5'-deoxyadenosine + 2 L-methionine + 2 oxidized [2Fe-2S]-[ferredoxin]</text>
        <dbReference type="Rhea" id="RHEA:22060"/>
        <dbReference type="Rhea" id="RHEA-COMP:10000"/>
        <dbReference type="Rhea" id="RHEA-COMP:10001"/>
        <dbReference type="Rhea" id="RHEA-COMP:14737"/>
        <dbReference type="Rhea" id="RHEA-COMP:14739"/>
        <dbReference type="ChEBI" id="CHEBI:17319"/>
        <dbReference type="ChEBI" id="CHEBI:29917"/>
        <dbReference type="ChEBI" id="CHEBI:33737"/>
        <dbReference type="ChEBI" id="CHEBI:33738"/>
        <dbReference type="ChEBI" id="CHEBI:57586"/>
        <dbReference type="ChEBI" id="CHEBI:57844"/>
        <dbReference type="ChEBI" id="CHEBI:59789"/>
        <dbReference type="ChEBI" id="CHEBI:64428"/>
        <dbReference type="ChEBI" id="CHEBI:149473"/>
        <dbReference type="EC" id="2.8.1.6"/>
    </reaction>
</comment>
<comment type="cofactor">
    <cofactor evidence="1">
        <name>[4Fe-4S] cluster</name>
        <dbReference type="ChEBI" id="CHEBI:49883"/>
    </cofactor>
    <text evidence="1">Binds 1 [4Fe-4S] cluster. The cluster is coordinated with 3 cysteines and an exchangeable S-adenosyl-L-methionine.</text>
</comment>
<comment type="cofactor">
    <cofactor evidence="1">
        <name>[2Fe-2S] cluster</name>
        <dbReference type="ChEBI" id="CHEBI:190135"/>
    </cofactor>
    <text evidence="1">Binds 1 [2Fe-2S] cluster. The cluster is coordinated with 3 cysteines and 1 arginine.</text>
</comment>
<comment type="pathway">
    <text evidence="1">Cofactor biosynthesis; biotin biosynthesis; biotin from 7,8-diaminononanoate: step 2/2.</text>
</comment>
<comment type="subunit">
    <text evidence="1">Homodimer.</text>
</comment>
<comment type="similarity">
    <text evidence="1">Belongs to the radical SAM superfamily. Biotin synthase family.</text>
</comment>
<sequence>MTVSPVALRRKTECKPHPTARYWKKCDVEALFGLPFLDLIYQAAEIHRQNFNPREIQLSTLLSIKTGGCPEDCAYCPQSAHHNTNLGKEQMMDVDEIVEKAKIAKSRGASRFCMGAAWRGPKPKDVETVSAIIKAVKGLGMETCGTFGMLEEGMAEDLKEAGLDYYNHNLDTDPDRYNDIIHTRRHEDRMDTLGKVRNAGLKVCCGGIVGMNETRAERAGLIASLANLDPQPESVPINRLVKVEGTPLDDAEDLDWTEFVRTIAVARITMPQSYVRLSAGRSNMPEAMQAMCFMAGANSIFYGDKLLTTGNPDEDGDRILMEKLNLYPLQFELEGEVAEVEKASGIKVDY</sequence>
<feature type="chain" id="PRO_0000381496" description="Biotin synthase">
    <location>
        <begin position="1"/>
        <end position="350"/>
    </location>
</feature>
<feature type="domain" description="Radical SAM core" evidence="2">
    <location>
        <begin position="54"/>
        <end position="278"/>
    </location>
</feature>
<feature type="binding site" evidence="1">
    <location>
        <position position="69"/>
    </location>
    <ligand>
        <name>[4Fe-4S] cluster</name>
        <dbReference type="ChEBI" id="CHEBI:49883"/>
        <note>4Fe-4S-S-AdoMet</note>
    </ligand>
</feature>
<feature type="binding site" evidence="1">
    <location>
        <position position="73"/>
    </location>
    <ligand>
        <name>[4Fe-4S] cluster</name>
        <dbReference type="ChEBI" id="CHEBI:49883"/>
        <note>4Fe-4S-S-AdoMet</note>
    </ligand>
</feature>
<feature type="binding site" evidence="1">
    <location>
        <position position="76"/>
    </location>
    <ligand>
        <name>[4Fe-4S] cluster</name>
        <dbReference type="ChEBI" id="CHEBI:49883"/>
        <note>4Fe-4S-S-AdoMet</note>
    </ligand>
</feature>
<feature type="binding site" evidence="1">
    <location>
        <position position="113"/>
    </location>
    <ligand>
        <name>[2Fe-2S] cluster</name>
        <dbReference type="ChEBI" id="CHEBI:190135"/>
    </ligand>
</feature>
<feature type="binding site" evidence="1">
    <location>
        <position position="144"/>
    </location>
    <ligand>
        <name>[2Fe-2S] cluster</name>
        <dbReference type="ChEBI" id="CHEBI:190135"/>
    </ligand>
</feature>
<feature type="binding site" evidence="1">
    <location>
        <position position="204"/>
    </location>
    <ligand>
        <name>[2Fe-2S] cluster</name>
        <dbReference type="ChEBI" id="CHEBI:190135"/>
    </ligand>
</feature>
<feature type="binding site" evidence="1">
    <location>
        <position position="276"/>
    </location>
    <ligand>
        <name>[2Fe-2S] cluster</name>
        <dbReference type="ChEBI" id="CHEBI:190135"/>
    </ligand>
</feature>
<proteinExistence type="inferred from homology"/>
<evidence type="ECO:0000255" key="1">
    <source>
        <dbReference type="HAMAP-Rule" id="MF_01694"/>
    </source>
</evidence>
<evidence type="ECO:0000255" key="2">
    <source>
        <dbReference type="PROSITE-ProRule" id="PRU01266"/>
    </source>
</evidence>
<keyword id="KW-0001">2Fe-2S</keyword>
<keyword id="KW-0004">4Fe-4S</keyword>
<keyword id="KW-0093">Biotin biosynthesis</keyword>
<keyword id="KW-0408">Iron</keyword>
<keyword id="KW-0411">Iron-sulfur</keyword>
<keyword id="KW-0479">Metal-binding</keyword>
<keyword id="KW-0949">S-adenosyl-L-methionine</keyword>
<keyword id="KW-0808">Transferase</keyword>
<dbReference type="EC" id="2.8.1.6" evidence="1"/>
<dbReference type="EMBL" id="AL157959">
    <property type="protein sequence ID" value="CAM08531.1"/>
    <property type="molecule type" value="Genomic_DNA"/>
</dbReference>
<dbReference type="PIR" id="H81904">
    <property type="entry name" value="H81904"/>
</dbReference>
<dbReference type="RefSeq" id="WP_002222463.1">
    <property type="nucleotide sequence ID" value="NC_003116.1"/>
</dbReference>
<dbReference type="SMR" id="A1IRY3"/>
<dbReference type="EnsemblBacteria" id="CAM08531">
    <property type="protein sequence ID" value="CAM08531"/>
    <property type="gene ID" value="NMA1358"/>
</dbReference>
<dbReference type="GeneID" id="93386043"/>
<dbReference type="KEGG" id="nma:NMA1358"/>
<dbReference type="HOGENOM" id="CLU_033172_1_2_4"/>
<dbReference type="UniPathway" id="UPA00078">
    <property type="reaction ID" value="UER00162"/>
</dbReference>
<dbReference type="Proteomes" id="UP000000626">
    <property type="component" value="Chromosome"/>
</dbReference>
<dbReference type="GO" id="GO:0051537">
    <property type="term" value="F:2 iron, 2 sulfur cluster binding"/>
    <property type="evidence" value="ECO:0007669"/>
    <property type="project" value="UniProtKB-KW"/>
</dbReference>
<dbReference type="GO" id="GO:0051539">
    <property type="term" value="F:4 iron, 4 sulfur cluster binding"/>
    <property type="evidence" value="ECO:0007669"/>
    <property type="project" value="UniProtKB-KW"/>
</dbReference>
<dbReference type="GO" id="GO:0004076">
    <property type="term" value="F:biotin synthase activity"/>
    <property type="evidence" value="ECO:0007669"/>
    <property type="project" value="UniProtKB-UniRule"/>
</dbReference>
<dbReference type="GO" id="GO:0005506">
    <property type="term" value="F:iron ion binding"/>
    <property type="evidence" value="ECO:0007669"/>
    <property type="project" value="UniProtKB-UniRule"/>
</dbReference>
<dbReference type="GO" id="GO:0009102">
    <property type="term" value="P:biotin biosynthetic process"/>
    <property type="evidence" value="ECO:0007669"/>
    <property type="project" value="UniProtKB-UniRule"/>
</dbReference>
<dbReference type="CDD" id="cd01335">
    <property type="entry name" value="Radical_SAM"/>
    <property type="match status" value="1"/>
</dbReference>
<dbReference type="FunFam" id="3.20.20.70:FF:000011">
    <property type="entry name" value="Biotin synthase"/>
    <property type="match status" value="1"/>
</dbReference>
<dbReference type="Gene3D" id="3.20.20.70">
    <property type="entry name" value="Aldolase class I"/>
    <property type="match status" value="1"/>
</dbReference>
<dbReference type="HAMAP" id="MF_01694">
    <property type="entry name" value="BioB"/>
    <property type="match status" value="1"/>
</dbReference>
<dbReference type="InterPro" id="IPR013785">
    <property type="entry name" value="Aldolase_TIM"/>
</dbReference>
<dbReference type="InterPro" id="IPR010722">
    <property type="entry name" value="BATS_dom"/>
</dbReference>
<dbReference type="InterPro" id="IPR002684">
    <property type="entry name" value="Biotin_synth/BioAB"/>
</dbReference>
<dbReference type="InterPro" id="IPR024177">
    <property type="entry name" value="Biotin_synthase"/>
</dbReference>
<dbReference type="InterPro" id="IPR006638">
    <property type="entry name" value="Elp3/MiaA/NifB-like_rSAM"/>
</dbReference>
<dbReference type="InterPro" id="IPR007197">
    <property type="entry name" value="rSAM"/>
</dbReference>
<dbReference type="NCBIfam" id="TIGR00433">
    <property type="entry name" value="bioB"/>
    <property type="match status" value="1"/>
</dbReference>
<dbReference type="PANTHER" id="PTHR22976">
    <property type="entry name" value="BIOTIN SYNTHASE"/>
    <property type="match status" value="1"/>
</dbReference>
<dbReference type="PANTHER" id="PTHR22976:SF2">
    <property type="entry name" value="BIOTIN SYNTHASE, MITOCHONDRIAL"/>
    <property type="match status" value="1"/>
</dbReference>
<dbReference type="Pfam" id="PF06968">
    <property type="entry name" value="BATS"/>
    <property type="match status" value="1"/>
</dbReference>
<dbReference type="Pfam" id="PF04055">
    <property type="entry name" value="Radical_SAM"/>
    <property type="match status" value="1"/>
</dbReference>
<dbReference type="PIRSF" id="PIRSF001619">
    <property type="entry name" value="Biotin_synth"/>
    <property type="match status" value="1"/>
</dbReference>
<dbReference type="SFLD" id="SFLDG01060">
    <property type="entry name" value="BATS_domain_containing"/>
    <property type="match status" value="1"/>
</dbReference>
<dbReference type="SFLD" id="SFLDF00272">
    <property type="entry name" value="biotin_synthase"/>
    <property type="match status" value="1"/>
</dbReference>
<dbReference type="SMART" id="SM00876">
    <property type="entry name" value="BATS"/>
    <property type="match status" value="1"/>
</dbReference>
<dbReference type="SMART" id="SM00729">
    <property type="entry name" value="Elp3"/>
    <property type="match status" value="1"/>
</dbReference>
<dbReference type="SUPFAM" id="SSF102114">
    <property type="entry name" value="Radical SAM enzymes"/>
    <property type="match status" value="1"/>
</dbReference>
<dbReference type="PROSITE" id="PS51918">
    <property type="entry name" value="RADICAL_SAM"/>
    <property type="match status" value="1"/>
</dbReference>
<name>BIOB_NEIMA</name>
<protein>
    <recommendedName>
        <fullName evidence="1">Biotin synthase</fullName>
        <ecNumber evidence="1">2.8.1.6</ecNumber>
    </recommendedName>
</protein>
<accession>A1IRY3</accession>
<gene>
    <name evidence="1" type="primary">bioB</name>
    <name type="ordered locus">NMA1358</name>
</gene>
<reference key="1">
    <citation type="journal article" date="2000" name="Nature">
        <title>Complete DNA sequence of a serogroup A strain of Neisseria meningitidis Z2491.</title>
        <authorList>
            <person name="Parkhill J."/>
            <person name="Achtman M."/>
            <person name="James K.D."/>
            <person name="Bentley S.D."/>
            <person name="Churcher C.M."/>
            <person name="Klee S.R."/>
            <person name="Morelli G."/>
            <person name="Basham D."/>
            <person name="Brown D."/>
            <person name="Chillingworth T."/>
            <person name="Davies R.M."/>
            <person name="Davis P."/>
            <person name="Devlin K."/>
            <person name="Feltwell T."/>
            <person name="Hamlin N."/>
            <person name="Holroyd S."/>
            <person name="Jagels K."/>
            <person name="Leather S."/>
            <person name="Moule S."/>
            <person name="Mungall K.L."/>
            <person name="Quail M.A."/>
            <person name="Rajandream M.A."/>
            <person name="Rutherford K.M."/>
            <person name="Simmonds M."/>
            <person name="Skelton J."/>
            <person name="Whitehead S."/>
            <person name="Spratt B.G."/>
            <person name="Barrell B.G."/>
        </authorList>
    </citation>
    <scope>NUCLEOTIDE SEQUENCE [LARGE SCALE GENOMIC DNA]</scope>
    <source>
        <strain>DSM 15465 / Z2491</strain>
    </source>
</reference>
<organism>
    <name type="scientific">Neisseria meningitidis serogroup A / serotype 4A (strain DSM 15465 / Z2491)</name>
    <dbReference type="NCBI Taxonomy" id="122587"/>
    <lineage>
        <taxon>Bacteria</taxon>
        <taxon>Pseudomonadati</taxon>
        <taxon>Pseudomonadota</taxon>
        <taxon>Betaproteobacteria</taxon>
        <taxon>Neisseriales</taxon>
        <taxon>Neisseriaceae</taxon>
        <taxon>Neisseria</taxon>
    </lineage>
</organism>